<name>PYRF_PSEA6</name>
<keyword id="KW-0210">Decarboxylase</keyword>
<keyword id="KW-0456">Lyase</keyword>
<keyword id="KW-0665">Pyrimidine biosynthesis</keyword>
<sequence length="231" mass="25204">MQDPKVVIALDFDVKKDALDFVDRIDPSQCRLKVGKEMFTYFGPEFVRTLVAKEFDVFLDLKFHDIPNTVAKACIAAADLGVWMVNVHASGGEDMMIRAREGLAQFGQDKPHLIAVTVLTSMDKRQLSQIGIQSSPMEHVLTLASLTKQAGLDGVVCSAQEAAMLKETLGKEFMLVTPGIRPQGSDVGDQKRIMTPQEAMQVGVDYMVIGRPITQAKDPVAALDAINVSIA</sequence>
<feature type="chain" id="PRO_1000065931" description="Orotidine 5'-phosphate decarboxylase">
    <location>
        <begin position="1"/>
        <end position="231"/>
    </location>
</feature>
<feature type="active site" description="Proton donor" evidence="1">
    <location>
        <position position="62"/>
    </location>
</feature>
<feature type="binding site" evidence="1">
    <location>
        <position position="11"/>
    </location>
    <ligand>
        <name>substrate</name>
    </ligand>
</feature>
<feature type="binding site" evidence="1">
    <location>
        <position position="33"/>
    </location>
    <ligand>
        <name>substrate</name>
    </ligand>
</feature>
<feature type="binding site" evidence="1">
    <location>
        <begin position="60"/>
        <end position="69"/>
    </location>
    <ligand>
        <name>substrate</name>
    </ligand>
</feature>
<feature type="binding site" evidence="1">
    <location>
        <position position="120"/>
    </location>
    <ligand>
        <name>substrate</name>
    </ligand>
</feature>
<feature type="binding site" evidence="1">
    <location>
        <position position="181"/>
    </location>
    <ligand>
        <name>substrate</name>
    </ligand>
</feature>
<feature type="binding site" evidence="1">
    <location>
        <position position="190"/>
    </location>
    <ligand>
        <name>substrate</name>
    </ligand>
</feature>
<feature type="binding site" evidence="1">
    <location>
        <position position="210"/>
    </location>
    <ligand>
        <name>substrate</name>
    </ligand>
</feature>
<feature type="binding site" evidence="1">
    <location>
        <position position="211"/>
    </location>
    <ligand>
        <name>substrate</name>
    </ligand>
</feature>
<evidence type="ECO:0000255" key="1">
    <source>
        <dbReference type="HAMAP-Rule" id="MF_01200"/>
    </source>
</evidence>
<accession>Q15T09</accession>
<proteinExistence type="inferred from homology"/>
<gene>
    <name evidence="1" type="primary">pyrF</name>
    <name type="ordered locus">Patl_2463</name>
</gene>
<organism>
    <name type="scientific">Pseudoalteromonas atlantica (strain T6c / ATCC BAA-1087)</name>
    <dbReference type="NCBI Taxonomy" id="3042615"/>
    <lineage>
        <taxon>Bacteria</taxon>
        <taxon>Pseudomonadati</taxon>
        <taxon>Pseudomonadota</taxon>
        <taxon>Gammaproteobacteria</taxon>
        <taxon>Alteromonadales</taxon>
        <taxon>Alteromonadaceae</taxon>
        <taxon>Paraglaciecola</taxon>
    </lineage>
</organism>
<dbReference type="EC" id="4.1.1.23" evidence="1"/>
<dbReference type="EMBL" id="CP000388">
    <property type="protein sequence ID" value="ABG40979.1"/>
    <property type="molecule type" value="Genomic_DNA"/>
</dbReference>
<dbReference type="RefSeq" id="WP_011575251.1">
    <property type="nucleotide sequence ID" value="NC_008228.1"/>
</dbReference>
<dbReference type="SMR" id="Q15T09"/>
<dbReference type="STRING" id="342610.Patl_2463"/>
<dbReference type="KEGG" id="pat:Patl_2463"/>
<dbReference type="eggNOG" id="COG0284">
    <property type="taxonomic scope" value="Bacteria"/>
</dbReference>
<dbReference type="HOGENOM" id="CLU_067069_0_0_6"/>
<dbReference type="OrthoDB" id="9806203at2"/>
<dbReference type="UniPathway" id="UPA00070">
    <property type="reaction ID" value="UER00120"/>
</dbReference>
<dbReference type="Proteomes" id="UP000001981">
    <property type="component" value="Chromosome"/>
</dbReference>
<dbReference type="GO" id="GO:0005829">
    <property type="term" value="C:cytosol"/>
    <property type="evidence" value="ECO:0007669"/>
    <property type="project" value="TreeGrafter"/>
</dbReference>
<dbReference type="GO" id="GO:0004590">
    <property type="term" value="F:orotidine-5'-phosphate decarboxylase activity"/>
    <property type="evidence" value="ECO:0007669"/>
    <property type="project" value="UniProtKB-UniRule"/>
</dbReference>
<dbReference type="GO" id="GO:0006207">
    <property type="term" value="P:'de novo' pyrimidine nucleobase biosynthetic process"/>
    <property type="evidence" value="ECO:0007669"/>
    <property type="project" value="InterPro"/>
</dbReference>
<dbReference type="GO" id="GO:0044205">
    <property type="term" value="P:'de novo' UMP biosynthetic process"/>
    <property type="evidence" value="ECO:0007669"/>
    <property type="project" value="UniProtKB-UniRule"/>
</dbReference>
<dbReference type="CDD" id="cd04725">
    <property type="entry name" value="OMP_decarboxylase_like"/>
    <property type="match status" value="1"/>
</dbReference>
<dbReference type="FunFam" id="3.20.20.70:FF:000015">
    <property type="entry name" value="Orotidine 5'-phosphate decarboxylase"/>
    <property type="match status" value="1"/>
</dbReference>
<dbReference type="Gene3D" id="3.20.20.70">
    <property type="entry name" value="Aldolase class I"/>
    <property type="match status" value="1"/>
</dbReference>
<dbReference type="HAMAP" id="MF_01200_B">
    <property type="entry name" value="OMPdecase_type1_B"/>
    <property type="match status" value="1"/>
</dbReference>
<dbReference type="InterPro" id="IPR013785">
    <property type="entry name" value="Aldolase_TIM"/>
</dbReference>
<dbReference type="InterPro" id="IPR014732">
    <property type="entry name" value="OMPdecase"/>
</dbReference>
<dbReference type="InterPro" id="IPR018089">
    <property type="entry name" value="OMPdecase_AS"/>
</dbReference>
<dbReference type="InterPro" id="IPR047596">
    <property type="entry name" value="OMPdecase_bac"/>
</dbReference>
<dbReference type="InterPro" id="IPR001754">
    <property type="entry name" value="OMPdeCOase_dom"/>
</dbReference>
<dbReference type="InterPro" id="IPR011060">
    <property type="entry name" value="RibuloseP-bd_barrel"/>
</dbReference>
<dbReference type="NCBIfam" id="NF001273">
    <property type="entry name" value="PRK00230.1"/>
    <property type="match status" value="1"/>
</dbReference>
<dbReference type="NCBIfam" id="TIGR01740">
    <property type="entry name" value="pyrF"/>
    <property type="match status" value="1"/>
</dbReference>
<dbReference type="PANTHER" id="PTHR32119">
    <property type="entry name" value="OROTIDINE 5'-PHOSPHATE DECARBOXYLASE"/>
    <property type="match status" value="1"/>
</dbReference>
<dbReference type="PANTHER" id="PTHR32119:SF2">
    <property type="entry name" value="OROTIDINE 5'-PHOSPHATE DECARBOXYLASE"/>
    <property type="match status" value="1"/>
</dbReference>
<dbReference type="Pfam" id="PF00215">
    <property type="entry name" value="OMPdecase"/>
    <property type="match status" value="1"/>
</dbReference>
<dbReference type="SMART" id="SM00934">
    <property type="entry name" value="OMPdecase"/>
    <property type="match status" value="1"/>
</dbReference>
<dbReference type="SUPFAM" id="SSF51366">
    <property type="entry name" value="Ribulose-phoshate binding barrel"/>
    <property type="match status" value="1"/>
</dbReference>
<dbReference type="PROSITE" id="PS00156">
    <property type="entry name" value="OMPDECASE"/>
    <property type="match status" value="1"/>
</dbReference>
<reference key="1">
    <citation type="submission" date="2006-06" db="EMBL/GenBank/DDBJ databases">
        <title>Complete sequence of Pseudoalteromonas atlantica T6c.</title>
        <authorList>
            <consortium name="US DOE Joint Genome Institute"/>
            <person name="Copeland A."/>
            <person name="Lucas S."/>
            <person name="Lapidus A."/>
            <person name="Barry K."/>
            <person name="Detter J.C."/>
            <person name="Glavina del Rio T."/>
            <person name="Hammon N."/>
            <person name="Israni S."/>
            <person name="Dalin E."/>
            <person name="Tice H."/>
            <person name="Pitluck S."/>
            <person name="Saunders E."/>
            <person name="Brettin T."/>
            <person name="Bruce D."/>
            <person name="Han C."/>
            <person name="Tapia R."/>
            <person name="Gilna P."/>
            <person name="Schmutz J."/>
            <person name="Larimer F."/>
            <person name="Land M."/>
            <person name="Hauser L."/>
            <person name="Kyrpides N."/>
            <person name="Kim E."/>
            <person name="Karls A.C."/>
            <person name="Bartlett D."/>
            <person name="Higgins B.P."/>
            <person name="Richardson P."/>
        </authorList>
    </citation>
    <scope>NUCLEOTIDE SEQUENCE [LARGE SCALE GENOMIC DNA]</scope>
    <source>
        <strain>T6c / ATCC BAA-1087</strain>
    </source>
</reference>
<protein>
    <recommendedName>
        <fullName evidence="1">Orotidine 5'-phosphate decarboxylase</fullName>
        <ecNumber evidence="1">4.1.1.23</ecNumber>
    </recommendedName>
    <alternativeName>
        <fullName evidence="1">OMP decarboxylase</fullName>
        <shortName evidence="1">OMPDCase</shortName>
        <shortName evidence="1">OMPdecase</shortName>
    </alternativeName>
</protein>
<comment type="function">
    <text evidence="1">Catalyzes the decarboxylation of orotidine 5'-monophosphate (OMP) to uridine 5'-monophosphate (UMP).</text>
</comment>
<comment type="catalytic activity">
    <reaction evidence="1">
        <text>orotidine 5'-phosphate + H(+) = UMP + CO2</text>
        <dbReference type="Rhea" id="RHEA:11596"/>
        <dbReference type="ChEBI" id="CHEBI:15378"/>
        <dbReference type="ChEBI" id="CHEBI:16526"/>
        <dbReference type="ChEBI" id="CHEBI:57538"/>
        <dbReference type="ChEBI" id="CHEBI:57865"/>
        <dbReference type="EC" id="4.1.1.23"/>
    </reaction>
</comment>
<comment type="pathway">
    <text evidence="1">Pyrimidine metabolism; UMP biosynthesis via de novo pathway; UMP from orotate: step 2/2.</text>
</comment>
<comment type="subunit">
    <text evidence="1">Homodimer.</text>
</comment>
<comment type="similarity">
    <text evidence="1">Belongs to the OMP decarboxylase family. Type 1 subfamily.</text>
</comment>